<reference key="1">
    <citation type="journal article" date="2002" name="DNA Res.">
        <title>Complete genomic sequence of nitrogen-fixing symbiotic bacterium Bradyrhizobium japonicum USDA110.</title>
        <authorList>
            <person name="Kaneko T."/>
            <person name="Nakamura Y."/>
            <person name="Sato S."/>
            <person name="Minamisawa K."/>
            <person name="Uchiumi T."/>
            <person name="Sasamoto S."/>
            <person name="Watanabe A."/>
            <person name="Idesawa K."/>
            <person name="Iriguchi M."/>
            <person name="Kawashima K."/>
            <person name="Kohara M."/>
            <person name="Matsumoto M."/>
            <person name="Shimpo S."/>
            <person name="Tsuruoka H."/>
            <person name="Wada T."/>
            <person name="Yamada M."/>
            <person name="Tabata S."/>
        </authorList>
    </citation>
    <scope>NUCLEOTIDE SEQUENCE [LARGE SCALE GENOMIC DNA]</scope>
    <source>
        <strain>JCM 10833 / BCRC 13528 / IAM 13628 / NBRC 14792 / USDA 110</strain>
    </source>
</reference>
<protein>
    <recommendedName>
        <fullName evidence="1">Exodeoxyribonuclease 7 small subunit</fullName>
        <ecNumber evidence="1">3.1.11.6</ecNumber>
    </recommendedName>
    <alternativeName>
        <fullName evidence="1">Exodeoxyribonuclease VII small subunit</fullName>
        <shortName evidence="1">Exonuclease VII small subunit</shortName>
    </alternativeName>
</protein>
<comment type="function">
    <text evidence="1">Bidirectionally degrades single-stranded DNA into large acid-insoluble oligonucleotides, which are then degraded further into small acid-soluble oligonucleotides.</text>
</comment>
<comment type="catalytic activity">
    <reaction evidence="1">
        <text>Exonucleolytic cleavage in either 5'- to 3'- or 3'- to 5'-direction to yield nucleoside 5'-phosphates.</text>
        <dbReference type="EC" id="3.1.11.6"/>
    </reaction>
</comment>
<comment type="subunit">
    <text evidence="1">Heterooligomer composed of large and small subunits.</text>
</comment>
<comment type="subcellular location">
    <subcellularLocation>
        <location evidence="1">Cytoplasm</location>
    </subcellularLocation>
</comment>
<comment type="similarity">
    <text evidence="1">Belongs to the XseB family.</text>
</comment>
<name>EX7S_BRADU</name>
<feature type="chain" id="PRO_0000206928" description="Exodeoxyribonuclease 7 small subunit">
    <location>
        <begin position="1"/>
        <end position="83"/>
    </location>
</feature>
<dbReference type="EC" id="3.1.11.6" evidence="1"/>
<dbReference type="EMBL" id="BA000040">
    <property type="protein sequence ID" value="BAC47917.1"/>
    <property type="molecule type" value="Genomic_DNA"/>
</dbReference>
<dbReference type="RefSeq" id="NP_769292.1">
    <property type="nucleotide sequence ID" value="NC_004463.1"/>
</dbReference>
<dbReference type="RefSeq" id="WP_008132970.1">
    <property type="nucleotide sequence ID" value="NZ_CP011360.1"/>
</dbReference>
<dbReference type="SMR" id="Q89RW0"/>
<dbReference type="FunCoup" id="Q89RW0">
    <property type="interactions" value="429"/>
</dbReference>
<dbReference type="STRING" id="224911.AAV28_10255"/>
<dbReference type="EnsemblBacteria" id="BAC47917">
    <property type="protein sequence ID" value="BAC47917"/>
    <property type="gene ID" value="BAC47917"/>
</dbReference>
<dbReference type="KEGG" id="bja:bsl2652"/>
<dbReference type="PATRIC" id="fig|224911.44.peg.2253"/>
<dbReference type="eggNOG" id="COG1722">
    <property type="taxonomic scope" value="Bacteria"/>
</dbReference>
<dbReference type="HOGENOM" id="CLU_145918_0_3_5"/>
<dbReference type="InParanoid" id="Q89RW0"/>
<dbReference type="OrthoDB" id="9808145at2"/>
<dbReference type="PhylomeDB" id="Q89RW0"/>
<dbReference type="Proteomes" id="UP000002526">
    <property type="component" value="Chromosome"/>
</dbReference>
<dbReference type="GO" id="GO:0005829">
    <property type="term" value="C:cytosol"/>
    <property type="evidence" value="ECO:0000318"/>
    <property type="project" value="GO_Central"/>
</dbReference>
<dbReference type="GO" id="GO:0009318">
    <property type="term" value="C:exodeoxyribonuclease VII complex"/>
    <property type="evidence" value="ECO:0007669"/>
    <property type="project" value="InterPro"/>
</dbReference>
<dbReference type="GO" id="GO:0008855">
    <property type="term" value="F:exodeoxyribonuclease VII activity"/>
    <property type="evidence" value="ECO:0000318"/>
    <property type="project" value="GO_Central"/>
</dbReference>
<dbReference type="GO" id="GO:0006308">
    <property type="term" value="P:DNA catabolic process"/>
    <property type="evidence" value="ECO:0007669"/>
    <property type="project" value="UniProtKB-UniRule"/>
</dbReference>
<dbReference type="FunFam" id="1.10.287.1040:FF:000004">
    <property type="entry name" value="Exodeoxyribonuclease 7 small subunit"/>
    <property type="match status" value="1"/>
</dbReference>
<dbReference type="Gene3D" id="1.10.287.1040">
    <property type="entry name" value="Exonuclease VII, small subunit"/>
    <property type="match status" value="1"/>
</dbReference>
<dbReference type="HAMAP" id="MF_00337">
    <property type="entry name" value="Exonuc_7_S"/>
    <property type="match status" value="1"/>
</dbReference>
<dbReference type="InterPro" id="IPR003761">
    <property type="entry name" value="Exonuc_VII_S"/>
</dbReference>
<dbReference type="InterPro" id="IPR037004">
    <property type="entry name" value="Exonuc_VII_ssu_sf"/>
</dbReference>
<dbReference type="NCBIfam" id="NF002139">
    <property type="entry name" value="PRK00977.1-3"/>
    <property type="match status" value="1"/>
</dbReference>
<dbReference type="NCBIfam" id="NF002140">
    <property type="entry name" value="PRK00977.1-4"/>
    <property type="match status" value="1"/>
</dbReference>
<dbReference type="NCBIfam" id="TIGR01280">
    <property type="entry name" value="xseB"/>
    <property type="match status" value="1"/>
</dbReference>
<dbReference type="PANTHER" id="PTHR34137">
    <property type="entry name" value="EXODEOXYRIBONUCLEASE 7 SMALL SUBUNIT"/>
    <property type="match status" value="1"/>
</dbReference>
<dbReference type="PANTHER" id="PTHR34137:SF1">
    <property type="entry name" value="EXODEOXYRIBONUCLEASE 7 SMALL SUBUNIT"/>
    <property type="match status" value="1"/>
</dbReference>
<dbReference type="Pfam" id="PF02609">
    <property type="entry name" value="Exonuc_VII_S"/>
    <property type="match status" value="1"/>
</dbReference>
<dbReference type="PIRSF" id="PIRSF006488">
    <property type="entry name" value="Exonuc_VII_S"/>
    <property type="match status" value="1"/>
</dbReference>
<dbReference type="SUPFAM" id="SSF116842">
    <property type="entry name" value="XseB-like"/>
    <property type="match status" value="1"/>
</dbReference>
<gene>
    <name evidence="1" type="primary">xseB</name>
    <name type="ordered locus">bsl2652</name>
</gene>
<evidence type="ECO:0000255" key="1">
    <source>
        <dbReference type="HAMAP-Rule" id="MF_00337"/>
    </source>
</evidence>
<keyword id="KW-0963">Cytoplasm</keyword>
<keyword id="KW-0269">Exonuclease</keyword>
<keyword id="KW-0378">Hydrolase</keyword>
<keyword id="KW-0540">Nuclease</keyword>
<keyword id="KW-1185">Reference proteome</keyword>
<organism>
    <name type="scientific">Bradyrhizobium diazoefficiens (strain JCM 10833 / BCRC 13528 / IAM 13628 / NBRC 14792 / USDA 110)</name>
    <dbReference type="NCBI Taxonomy" id="224911"/>
    <lineage>
        <taxon>Bacteria</taxon>
        <taxon>Pseudomonadati</taxon>
        <taxon>Pseudomonadota</taxon>
        <taxon>Alphaproteobacteria</taxon>
        <taxon>Hyphomicrobiales</taxon>
        <taxon>Nitrobacteraceae</taxon>
        <taxon>Bradyrhizobium</taxon>
    </lineage>
</organism>
<accession>Q89RW0</accession>
<sequence>MAENTQVDVSRLTFERAIEELETIVKRLEDGKVPLEESVTIYERGEALKRRCEELLRQAEARVDKITTDASGQATGTAPLDVQ</sequence>
<proteinExistence type="inferred from homology"/>